<gene>
    <name evidence="1" type="primary">rplE</name>
    <name type="ordered locus">SSP0675</name>
</gene>
<accession>Q49ZF6</accession>
<sequence length="179" mass="20215">MNRLKEKFNSEVTQNLVKQFDYSSVMEVPKIEKIVVNMGVGDAVQNTKVLDDAVEELQAITGQKPLITKAKKSVATFRLREGMPIGAKVTLRGERMYDFLDKLIAVSLPRVRDFQGVSKTAFDGRGNYTLGVKEQLIFPEIDYDRVNKVRGMDIVIVTTANTDEEARELLSQFGMPFHK</sequence>
<keyword id="KW-1185">Reference proteome</keyword>
<keyword id="KW-0687">Ribonucleoprotein</keyword>
<keyword id="KW-0689">Ribosomal protein</keyword>
<keyword id="KW-0694">RNA-binding</keyword>
<keyword id="KW-0699">rRNA-binding</keyword>
<keyword id="KW-0820">tRNA-binding</keyword>
<dbReference type="EMBL" id="AP008934">
    <property type="protein sequence ID" value="BAE17820.1"/>
    <property type="molecule type" value="Genomic_DNA"/>
</dbReference>
<dbReference type="RefSeq" id="WP_002482624.1">
    <property type="nucleotide sequence ID" value="NZ_MTGA01000036.1"/>
</dbReference>
<dbReference type="SMR" id="Q49ZF6"/>
<dbReference type="GeneID" id="66866822"/>
<dbReference type="KEGG" id="ssp:SSP0675"/>
<dbReference type="eggNOG" id="COG0094">
    <property type="taxonomic scope" value="Bacteria"/>
</dbReference>
<dbReference type="HOGENOM" id="CLU_061015_2_1_9"/>
<dbReference type="OrthoDB" id="9806626at2"/>
<dbReference type="Proteomes" id="UP000006371">
    <property type="component" value="Chromosome"/>
</dbReference>
<dbReference type="GO" id="GO:1990904">
    <property type="term" value="C:ribonucleoprotein complex"/>
    <property type="evidence" value="ECO:0007669"/>
    <property type="project" value="UniProtKB-KW"/>
</dbReference>
<dbReference type="GO" id="GO:0005840">
    <property type="term" value="C:ribosome"/>
    <property type="evidence" value="ECO:0007669"/>
    <property type="project" value="UniProtKB-KW"/>
</dbReference>
<dbReference type="GO" id="GO:0019843">
    <property type="term" value="F:rRNA binding"/>
    <property type="evidence" value="ECO:0007669"/>
    <property type="project" value="UniProtKB-UniRule"/>
</dbReference>
<dbReference type="GO" id="GO:0003735">
    <property type="term" value="F:structural constituent of ribosome"/>
    <property type="evidence" value="ECO:0007669"/>
    <property type="project" value="InterPro"/>
</dbReference>
<dbReference type="GO" id="GO:0000049">
    <property type="term" value="F:tRNA binding"/>
    <property type="evidence" value="ECO:0007669"/>
    <property type="project" value="UniProtKB-UniRule"/>
</dbReference>
<dbReference type="GO" id="GO:0006412">
    <property type="term" value="P:translation"/>
    <property type="evidence" value="ECO:0007669"/>
    <property type="project" value="UniProtKB-UniRule"/>
</dbReference>
<dbReference type="FunFam" id="3.30.1440.10:FF:000001">
    <property type="entry name" value="50S ribosomal protein L5"/>
    <property type="match status" value="1"/>
</dbReference>
<dbReference type="Gene3D" id="3.30.1440.10">
    <property type="match status" value="1"/>
</dbReference>
<dbReference type="HAMAP" id="MF_01333_B">
    <property type="entry name" value="Ribosomal_uL5_B"/>
    <property type="match status" value="1"/>
</dbReference>
<dbReference type="InterPro" id="IPR002132">
    <property type="entry name" value="Ribosomal_uL5"/>
</dbReference>
<dbReference type="InterPro" id="IPR020930">
    <property type="entry name" value="Ribosomal_uL5_bac-type"/>
</dbReference>
<dbReference type="InterPro" id="IPR031309">
    <property type="entry name" value="Ribosomal_uL5_C"/>
</dbReference>
<dbReference type="InterPro" id="IPR020929">
    <property type="entry name" value="Ribosomal_uL5_CS"/>
</dbReference>
<dbReference type="InterPro" id="IPR022803">
    <property type="entry name" value="Ribosomal_uL5_dom_sf"/>
</dbReference>
<dbReference type="InterPro" id="IPR031310">
    <property type="entry name" value="Ribosomal_uL5_N"/>
</dbReference>
<dbReference type="NCBIfam" id="NF000585">
    <property type="entry name" value="PRK00010.1"/>
    <property type="match status" value="1"/>
</dbReference>
<dbReference type="PANTHER" id="PTHR11994">
    <property type="entry name" value="60S RIBOSOMAL PROTEIN L11-RELATED"/>
    <property type="match status" value="1"/>
</dbReference>
<dbReference type="Pfam" id="PF00281">
    <property type="entry name" value="Ribosomal_L5"/>
    <property type="match status" value="1"/>
</dbReference>
<dbReference type="Pfam" id="PF00673">
    <property type="entry name" value="Ribosomal_L5_C"/>
    <property type="match status" value="1"/>
</dbReference>
<dbReference type="PIRSF" id="PIRSF002161">
    <property type="entry name" value="Ribosomal_L5"/>
    <property type="match status" value="1"/>
</dbReference>
<dbReference type="SUPFAM" id="SSF55282">
    <property type="entry name" value="RL5-like"/>
    <property type="match status" value="1"/>
</dbReference>
<dbReference type="PROSITE" id="PS00358">
    <property type="entry name" value="RIBOSOMAL_L5"/>
    <property type="match status" value="1"/>
</dbReference>
<reference key="1">
    <citation type="journal article" date="2005" name="Proc. Natl. Acad. Sci. U.S.A.">
        <title>Whole genome sequence of Staphylococcus saprophyticus reveals the pathogenesis of uncomplicated urinary tract infection.</title>
        <authorList>
            <person name="Kuroda M."/>
            <person name="Yamashita A."/>
            <person name="Hirakawa H."/>
            <person name="Kumano M."/>
            <person name="Morikawa K."/>
            <person name="Higashide M."/>
            <person name="Maruyama A."/>
            <person name="Inose Y."/>
            <person name="Matoba K."/>
            <person name="Toh H."/>
            <person name="Kuhara S."/>
            <person name="Hattori M."/>
            <person name="Ohta T."/>
        </authorList>
    </citation>
    <scope>NUCLEOTIDE SEQUENCE [LARGE SCALE GENOMIC DNA]</scope>
    <source>
        <strain>ATCC 15305 / DSM 20229 / NCIMB 8711 / NCTC 7292 / S-41</strain>
    </source>
</reference>
<name>RL5_STAS1</name>
<protein>
    <recommendedName>
        <fullName evidence="1">Large ribosomal subunit protein uL5</fullName>
    </recommendedName>
    <alternativeName>
        <fullName evidence="2">50S ribosomal protein L5</fullName>
    </alternativeName>
</protein>
<evidence type="ECO:0000255" key="1">
    <source>
        <dbReference type="HAMAP-Rule" id="MF_01333"/>
    </source>
</evidence>
<evidence type="ECO:0000305" key="2"/>
<feature type="chain" id="PRO_0000124995" description="Large ribosomal subunit protein uL5">
    <location>
        <begin position="1"/>
        <end position="179"/>
    </location>
</feature>
<organism>
    <name type="scientific">Staphylococcus saprophyticus subsp. saprophyticus (strain ATCC 15305 / DSM 20229 / NCIMB 8711 / NCTC 7292 / S-41)</name>
    <dbReference type="NCBI Taxonomy" id="342451"/>
    <lineage>
        <taxon>Bacteria</taxon>
        <taxon>Bacillati</taxon>
        <taxon>Bacillota</taxon>
        <taxon>Bacilli</taxon>
        <taxon>Bacillales</taxon>
        <taxon>Staphylococcaceae</taxon>
        <taxon>Staphylococcus</taxon>
    </lineage>
</organism>
<comment type="function">
    <text evidence="1">This is one of the proteins that bind and probably mediate the attachment of the 5S RNA into the large ribosomal subunit, where it forms part of the central protuberance. In the 70S ribosome it contacts protein S13 of the 30S subunit (bridge B1b), connecting the 2 subunits; this bridge is implicated in subunit movement. Contacts the P site tRNA; the 5S rRNA and some of its associated proteins might help stabilize positioning of ribosome-bound tRNAs.</text>
</comment>
<comment type="subunit">
    <text evidence="1">Part of the 50S ribosomal subunit; part of the 5S rRNA/L5/L18/L25 subcomplex. Contacts the 5S rRNA and the P site tRNA. Forms a bridge to the 30S subunit in the 70S ribosome.</text>
</comment>
<comment type="similarity">
    <text evidence="1">Belongs to the universal ribosomal protein uL5 family.</text>
</comment>
<proteinExistence type="inferred from homology"/>